<keyword id="KW-0002">3D-structure</keyword>
<keyword id="KW-0007">Acetylation</keyword>
<keyword id="KW-0025">Alternative splicing</keyword>
<keyword id="KW-0433">Leucine-rich repeat</keyword>
<keyword id="KW-0539">Nucleus</keyword>
<keyword id="KW-0597">Phosphoprotein</keyword>
<keyword id="KW-1267">Proteomics identification</keyword>
<keyword id="KW-1185">Reference proteome</keyword>
<keyword id="KW-0677">Repeat</keyword>
<feature type="initiator methionine" description="Removed" evidence="10">
    <location>
        <position position="1"/>
    </location>
</feature>
<feature type="chain" id="PRO_0000239613" description="Protein phosphatase 1 regulatory subunit 7">
    <location>
        <begin position="2"/>
        <end position="360"/>
    </location>
</feature>
<feature type="repeat" description="LRR 1">
    <location>
        <begin position="77"/>
        <end position="98"/>
    </location>
</feature>
<feature type="repeat" description="LRR 2">
    <location>
        <begin position="99"/>
        <end position="120"/>
    </location>
</feature>
<feature type="repeat" description="LRR 3">
    <location>
        <begin position="121"/>
        <end position="142"/>
    </location>
</feature>
<feature type="repeat" description="LRR 4">
    <location>
        <begin position="143"/>
        <end position="164"/>
    </location>
</feature>
<feature type="repeat" description="LRR 5">
    <location>
        <begin position="165"/>
        <end position="186"/>
    </location>
</feature>
<feature type="repeat" description="LRR 6">
    <location>
        <begin position="187"/>
        <end position="208"/>
    </location>
</feature>
<feature type="repeat" description="LRR 7">
    <location>
        <begin position="209"/>
        <end position="230"/>
    </location>
</feature>
<feature type="repeat" description="LRR 8">
    <location>
        <begin position="231"/>
        <end position="252"/>
    </location>
</feature>
<feature type="repeat" description="LRR 9">
    <location>
        <begin position="253"/>
        <end position="274"/>
    </location>
</feature>
<feature type="repeat" description="LRR 10">
    <location>
        <begin position="275"/>
        <end position="296"/>
    </location>
</feature>
<feature type="repeat" description="LRR 11">
    <location>
        <begin position="297"/>
        <end position="318"/>
    </location>
</feature>
<feature type="domain" description="LRRCT">
    <location>
        <begin position="331"/>
        <end position="360"/>
    </location>
</feature>
<feature type="region of interest" description="Disordered" evidence="2">
    <location>
        <begin position="1"/>
        <end position="64"/>
    </location>
</feature>
<feature type="compositionally biased region" description="Basic and acidic residues" evidence="2">
    <location>
        <begin position="17"/>
        <end position="34"/>
    </location>
</feature>
<feature type="compositionally biased region" description="Acidic residues" evidence="2">
    <location>
        <begin position="53"/>
        <end position="63"/>
    </location>
</feature>
<feature type="modified residue" description="N-acetylalanine" evidence="10">
    <location>
        <position position="2"/>
    </location>
</feature>
<feature type="modified residue" description="Phosphoserine" evidence="12 13">
    <location>
        <position position="12"/>
    </location>
</feature>
<feature type="modified residue" description="Phosphoserine" evidence="9 11 12">
    <location>
        <position position="24"/>
    </location>
</feature>
<feature type="modified residue" description="Phosphoserine" evidence="9 11 12 14">
    <location>
        <position position="27"/>
    </location>
</feature>
<feature type="modified residue" description="Phosphoserine" evidence="11 14">
    <location>
        <position position="44"/>
    </location>
</feature>
<feature type="modified residue" description="Phosphoserine" evidence="11 14">
    <location>
        <position position="47"/>
    </location>
</feature>
<feature type="modified residue" description="Phosphoserine" evidence="13">
    <location>
        <position position="322"/>
    </location>
</feature>
<feature type="splice variant" id="VSP_055672" description="In isoform 5." evidence="8">
    <original>MAAERGAGQQQSQEMMEVDRRVESEESGDEEGKKHSSGIVADLSEQSLKDGEERGEEDPE</original>
    <variation>M</variation>
    <location>
        <begin position="1"/>
        <end position="60"/>
    </location>
</feature>
<feature type="splice variant" id="VSP_019244" description="In isoform 2 and isoform 4." evidence="5">
    <location>
        <begin position="18"/>
        <end position="60"/>
    </location>
</feature>
<feature type="splice variant" id="VSP_019245" description="In isoform 3, isoform 4 and isoform 5." evidence="6 7">
    <original>NKLTMLD</original>
    <variation>VQDSLTY</variation>
    <location>
        <begin position="274"/>
        <end position="280"/>
    </location>
</feature>
<feature type="splice variant" id="VSP_019246" description="In isoform 3, isoform 4 and isoform 5." evidence="6 7">
    <location>
        <begin position="281"/>
        <end position="360"/>
    </location>
</feature>
<feature type="mutagenesis site" description="Completely abolishes the interaction with protein phosphatase 1." evidence="3">
    <original>D</original>
    <variation>V</variation>
    <location>
        <position position="148"/>
    </location>
</feature>
<feature type="mutagenesis site" description="Severely impaired the binding of protein phosphatase 1." evidence="3">
    <original>F</original>
    <variation>A</variation>
    <location>
        <position position="170"/>
    </location>
</feature>
<feature type="mutagenesis site" description="Completely abolishes the interaction with protein phosphatase 1." evidence="3">
    <original>E</original>
    <variation>A</variation>
    <location>
        <position position="192"/>
    </location>
</feature>
<feature type="mutagenesis site" description="Completely abolishes the interaction with protein phosphatase 1." evidence="3">
    <original>F</original>
    <variation>A</variation>
    <location>
        <position position="214"/>
    </location>
</feature>
<feature type="mutagenesis site" description="Severely impairs the binding of protein phosphatase 1." evidence="3">
    <original>D</original>
    <variation>A</variation>
    <location>
        <position position="280"/>
    </location>
</feature>
<feature type="mutagenesis site" description="Completely abolishes the interaction with protein phosphatase 1." evidence="3">
    <original>E</original>
    <variation>A</variation>
    <location>
        <position position="300"/>
    </location>
</feature>
<feature type="mutagenesis site" description="Completely abolishes the interaction with protein phosphatase 1." evidence="3">
    <original>W</original>
    <variation>A</variation>
    <location>
        <position position="302"/>
    </location>
</feature>
<feature type="mutagenesis site" description="Completely abolishes the interaction with protein phosphatase 1." evidence="3">
    <original>Y</original>
    <variation>A</variation>
    <location>
        <position position="327"/>
    </location>
</feature>
<feature type="turn" evidence="15">
    <location>
        <begin position="59"/>
        <end position="62"/>
    </location>
</feature>
<feature type="helix" evidence="15">
    <location>
        <begin position="69"/>
        <end position="74"/>
    </location>
</feature>
<feature type="turn" evidence="15">
    <location>
        <begin position="75"/>
        <end position="77"/>
    </location>
</feature>
<feature type="strand" evidence="17">
    <location>
        <begin position="79"/>
        <end position="82"/>
    </location>
</feature>
<feature type="helix" evidence="17">
    <location>
        <begin position="94"/>
        <end position="96"/>
    </location>
</feature>
<feature type="strand" evidence="17">
    <location>
        <begin position="102"/>
        <end position="104"/>
    </location>
</feature>
<feature type="strand" evidence="17">
    <location>
        <begin position="123"/>
        <end position="126"/>
    </location>
</feature>
<feature type="strand" evidence="17">
    <location>
        <begin position="146"/>
        <end position="148"/>
    </location>
</feature>
<feature type="strand" evidence="17">
    <location>
        <begin position="168"/>
        <end position="170"/>
    </location>
</feature>
<feature type="strand" evidence="17">
    <location>
        <begin position="190"/>
        <end position="192"/>
    </location>
</feature>
<feature type="strand" evidence="17">
    <location>
        <begin position="212"/>
        <end position="214"/>
    </location>
</feature>
<feature type="strand" evidence="17">
    <location>
        <begin position="234"/>
        <end position="236"/>
    </location>
</feature>
<feature type="strand" evidence="17">
    <location>
        <begin position="256"/>
        <end position="258"/>
    </location>
</feature>
<feature type="strand" evidence="17">
    <location>
        <begin position="278"/>
        <end position="280"/>
    </location>
</feature>
<feature type="strand" evidence="17">
    <location>
        <begin position="300"/>
        <end position="302"/>
    </location>
</feature>
<feature type="helix" evidence="17">
    <location>
        <begin position="311"/>
        <end position="317"/>
    </location>
</feature>
<feature type="strand" evidence="17">
    <location>
        <begin position="325"/>
        <end position="327"/>
    </location>
</feature>
<feature type="helix" evidence="17">
    <location>
        <begin position="332"/>
        <end position="335"/>
    </location>
</feature>
<feature type="helix" evidence="17">
    <location>
        <begin position="339"/>
        <end position="346"/>
    </location>
</feature>
<feature type="strand" evidence="16">
    <location>
        <begin position="351"/>
        <end position="353"/>
    </location>
</feature>
<proteinExistence type="evidence at protein level"/>
<evidence type="ECO:0000250" key="1"/>
<evidence type="ECO:0000256" key="2">
    <source>
        <dbReference type="SAM" id="MobiDB-lite"/>
    </source>
</evidence>
<evidence type="ECO:0000269" key="3">
    <source>
    </source>
</evidence>
<evidence type="ECO:0000269" key="4">
    <source>
    </source>
</evidence>
<evidence type="ECO:0000303" key="5">
    <source>
    </source>
</evidence>
<evidence type="ECO:0000303" key="6">
    <source>
    </source>
</evidence>
<evidence type="ECO:0000303" key="7">
    <source ref="3"/>
</evidence>
<evidence type="ECO:0000305" key="8"/>
<evidence type="ECO:0007744" key="9">
    <source>
    </source>
</evidence>
<evidence type="ECO:0007744" key="10">
    <source>
    </source>
</evidence>
<evidence type="ECO:0007744" key="11">
    <source>
    </source>
</evidence>
<evidence type="ECO:0007744" key="12">
    <source>
    </source>
</evidence>
<evidence type="ECO:0007744" key="13">
    <source>
    </source>
</evidence>
<evidence type="ECO:0007744" key="14">
    <source>
    </source>
</evidence>
<evidence type="ECO:0007829" key="15">
    <source>
        <dbReference type="PDB" id="6HKW"/>
    </source>
</evidence>
<evidence type="ECO:0007829" key="16">
    <source>
        <dbReference type="PDB" id="6MKY"/>
    </source>
</evidence>
<evidence type="ECO:0007829" key="17">
    <source>
        <dbReference type="PDB" id="6OBN"/>
    </source>
</evidence>
<gene>
    <name type="primary">PPP1R7</name>
    <name type="synonym">SDS22</name>
</gene>
<accession>Q15435</accession>
<accession>B4DFD4</accession>
<accession>B5MCY6</accession>
<accession>Q9UQE5</accession>
<accession>Q9UQE6</accession>
<accession>Q9Y6K4</accession>
<sequence>MAAERGAGQQQSQEMMEVDRRVESEESGDEEGKKHSSGIVADLSEQSLKDGEERGEEDPEEEHELPVDMETINLDRDAEDVDLNHYRIGKIEGFEVLKKVKTLCLRQNLIKCIENLEELQSLRELDLYDNQIKKIENLEALTELEILDISFNLLRNIEGVDKLTRLKKLFLVNNKISKIENLSNLHQLQMLELGSNRIRAIENIDTLTNLESLFLGKNKITKLQNLDALTNLTVLSMQSNRLTKIEGLQNLVNLRELYLSHNGIEVIEGLENNNKLTMLDIASNRIKKIENISHLTELQEFWMNDNLLESWSDLDELKGARSLETVYLERNPLQKDPQYRRKVMLALPSVRQIDATFVRF</sequence>
<name>PP1R7_HUMAN</name>
<reference key="1">
    <citation type="journal article" date="1995" name="FEBS Lett.">
        <title>Molecular cloning of a human polypeptide related to yeast sds22, a regulator of protein phosphatase-1.</title>
        <authorList>
            <person name="Renouf S."/>
            <person name="Beullens M."/>
            <person name="Wera S."/>
            <person name="Van Eynde A."/>
            <person name="Sikela J."/>
            <person name="Stalmans W."/>
            <person name="Bollen M."/>
        </authorList>
    </citation>
    <scope>NUCLEOTIDE SEQUENCE [MRNA] (ISOFORM 1)</scope>
    <scope>TISSUE SPECIFICITY</scope>
</reference>
<reference key="2">
    <citation type="journal article" date="1999" name="Eur. J. Biochem.">
        <title>Structure and splice products of the human gene encoding sds22, a putative mitotic regulator of protein phosphatase-1.</title>
        <authorList>
            <person name="Ceulemans H."/>
            <person name="Van Eynde A."/>
            <person name="Perez-Callejon E."/>
            <person name="Beullens M."/>
            <person name="Stalmans W."/>
            <person name="Bollen M."/>
        </authorList>
    </citation>
    <scope>NUCLEOTIDE SEQUENCE [GENOMIC DNA]</scope>
    <scope>ALTERNATIVE SPLICING</scope>
</reference>
<reference key="3">
    <citation type="submission" date="2004-10" db="EMBL/GenBank/DDBJ databases">
        <title>Cloning of human full-length CDSs in BD Creator(TM) system donor vector.</title>
        <authorList>
            <person name="Kalnine N."/>
            <person name="Chen X."/>
            <person name="Rolfs A."/>
            <person name="Halleck A."/>
            <person name="Hines L."/>
            <person name="Eisenstein S."/>
            <person name="Koundinya M."/>
            <person name="Raphael J."/>
            <person name="Moreira D."/>
            <person name="Kelley T."/>
            <person name="LaBaer J."/>
            <person name="Lin Y."/>
            <person name="Phelan M."/>
            <person name="Farmer A."/>
        </authorList>
    </citation>
    <scope>NUCLEOTIDE SEQUENCE [LARGE SCALE MRNA] (ISOFORMS 1 AND 3)</scope>
</reference>
<reference key="4">
    <citation type="journal article" date="2004" name="Nat. Genet.">
        <title>Complete sequencing and characterization of 21,243 full-length human cDNAs.</title>
        <authorList>
            <person name="Ota T."/>
            <person name="Suzuki Y."/>
            <person name="Nishikawa T."/>
            <person name="Otsuki T."/>
            <person name="Sugiyama T."/>
            <person name="Irie R."/>
            <person name="Wakamatsu A."/>
            <person name="Hayashi K."/>
            <person name="Sato H."/>
            <person name="Nagai K."/>
            <person name="Kimura K."/>
            <person name="Makita H."/>
            <person name="Sekine M."/>
            <person name="Obayashi M."/>
            <person name="Nishi T."/>
            <person name="Shibahara T."/>
            <person name="Tanaka T."/>
            <person name="Ishii S."/>
            <person name="Yamamoto J."/>
            <person name="Saito K."/>
            <person name="Kawai Y."/>
            <person name="Isono Y."/>
            <person name="Nakamura Y."/>
            <person name="Nagahari K."/>
            <person name="Murakami K."/>
            <person name="Yasuda T."/>
            <person name="Iwayanagi T."/>
            <person name="Wagatsuma M."/>
            <person name="Shiratori A."/>
            <person name="Sudo H."/>
            <person name="Hosoiri T."/>
            <person name="Kaku Y."/>
            <person name="Kodaira H."/>
            <person name="Kondo H."/>
            <person name="Sugawara M."/>
            <person name="Takahashi M."/>
            <person name="Kanda K."/>
            <person name="Yokoi T."/>
            <person name="Furuya T."/>
            <person name="Kikkawa E."/>
            <person name="Omura Y."/>
            <person name="Abe K."/>
            <person name="Kamihara K."/>
            <person name="Katsuta N."/>
            <person name="Sato K."/>
            <person name="Tanikawa M."/>
            <person name="Yamazaki M."/>
            <person name="Ninomiya K."/>
            <person name="Ishibashi T."/>
            <person name="Yamashita H."/>
            <person name="Murakawa K."/>
            <person name="Fujimori K."/>
            <person name="Tanai H."/>
            <person name="Kimata M."/>
            <person name="Watanabe M."/>
            <person name="Hiraoka S."/>
            <person name="Chiba Y."/>
            <person name="Ishida S."/>
            <person name="Ono Y."/>
            <person name="Takiguchi S."/>
            <person name="Watanabe S."/>
            <person name="Yosida M."/>
            <person name="Hotuta T."/>
            <person name="Kusano J."/>
            <person name="Kanehori K."/>
            <person name="Takahashi-Fujii A."/>
            <person name="Hara H."/>
            <person name="Tanase T.-O."/>
            <person name="Nomura Y."/>
            <person name="Togiya S."/>
            <person name="Komai F."/>
            <person name="Hara R."/>
            <person name="Takeuchi K."/>
            <person name="Arita M."/>
            <person name="Imose N."/>
            <person name="Musashino K."/>
            <person name="Yuuki H."/>
            <person name="Oshima A."/>
            <person name="Sasaki N."/>
            <person name="Aotsuka S."/>
            <person name="Yoshikawa Y."/>
            <person name="Matsunawa H."/>
            <person name="Ichihara T."/>
            <person name="Shiohata N."/>
            <person name="Sano S."/>
            <person name="Moriya S."/>
            <person name="Momiyama H."/>
            <person name="Satoh N."/>
            <person name="Takami S."/>
            <person name="Terashima Y."/>
            <person name="Suzuki O."/>
            <person name="Nakagawa S."/>
            <person name="Senoh A."/>
            <person name="Mizoguchi H."/>
            <person name="Goto Y."/>
            <person name="Shimizu F."/>
            <person name="Wakebe H."/>
            <person name="Hishigaki H."/>
            <person name="Watanabe T."/>
            <person name="Sugiyama A."/>
            <person name="Takemoto M."/>
            <person name="Kawakami B."/>
            <person name="Yamazaki M."/>
            <person name="Watanabe K."/>
            <person name="Kumagai A."/>
            <person name="Itakura S."/>
            <person name="Fukuzumi Y."/>
            <person name="Fujimori Y."/>
            <person name="Komiyama M."/>
            <person name="Tashiro H."/>
            <person name="Tanigami A."/>
            <person name="Fujiwara T."/>
            <person name="Ono T."/>
            <person name="Yamada K."/>
            <person name="Fujii Y."/>
            <person name="Ozaki K."/>
            <person name="Hirao M."/>
            <person name="Ohmori Y."/>
            <person name="Kawabata A."/>
            <person name="Hikiji T."/>
            <person name="Kobatake N."/>
            <person name="Inagaki H."/>
            <person name="Ikema Y."/>
            <person name="Okamoto S."/>
            <person name="Okitani R."/>
            <person name="Kawakami T."/>
            <person name="Noguchi S."/>
            <person name="Itoh T."/>
            <person name="Shigeta K."/>
            <person name="Senba T."/>
            <person name="Matsumura K."/>
            <person name="Nakajima Y."/>
            <person name="Mizuno T."/>
            <person name="Morinaga M."/>
            <person name="Sasaki M."/>
            <person name="Togashi T."/>
            <person name="Oyama M."/>
            <person name="Hata H."/>
            <person name="Watanabe M."/>
            <person name="Komatsu T."/>
            <person name="Mizushima-Sugano J."/>
            <person name="Satoh T."/>
            <person name="Shirai Y."/>
            <person name="Takahashi Y."/>
            <person name="Nakagawa K."/>
            <person name="Okumura K."/>
            <person name="Nagase T."/>
            <person name="Nomura N."/>
            <person name="Kikuchi H."/>
            <person name="Masuho Y."/>
            <person name="Yamashita R."/>
            <person name="Nakai K."/>
            <person name="Yada T."/>
            <person name="Nakamura Y."/>
            <person name="Ohara O."/>
            <person name="Isogai T."/>
            <person name="Sugano S."/>
        </authorList>
    </citation>
    <scope>NUCLEOTIDE SEQUENCE [LARGE SCALE MRNA] (ISOFORM 2)</scope>
    <source>
        <tissue>Cerebellum</tissue>
    </source>
</reference>
<reference key="5">
    <citation type="journal article" date="2005" name="Nature">
        <title>Generation and annotation of the DNA sequences of human chromosomes 2 and 4.</title>
        <authorList>
            <person name="Hillier L.W."/>
            <person name="Graves T.A."/>
            <person name="Fulton R.S."/>
            <person name="Fulton L.A."/>
            <person name="Pepin K.H."/>
            <person name="Minx P."/>
            <person name="Wagner-McPherson C."/>
            <person name="Layman D."/>
            <person name="Wylie K."/>
            <person name="Sekhon M."/>
            <person name="Becker M.C."/>
            <person name="Fewell G.A."/>
            <person name="Delehaunty K.D."/>
            <person name="Miner T.L."/>
            <person name="Nash W.E."/>
            <person name="Kremitzki C."/>
            <person name="Oddy L."/>
            <person name="Du H."/>
            <person name="Sun H."/>
            <person name="Bradshaw-Cordum H."/>
            <person name="Ali J."/>
            <person name="Carter J."/>
            <person name="Cordes M."/>
            <person name="Harris A."/>
            <person name="Isak A."/>
            <person name="van Brunt A."/>
            <person name="Nguyen C."/>
            <person name="Du F."/>
            <person name="Courtney L."/>
            <person name="Kalicki J."/>
            <person name="Ozersky P."/>
            <person name="Abbott S."/>
            <person name="Armstrong J."/>
            <person name="Belter E.A."/>
            <person name="Caruso L."/>
            <person name="Cedroni M."/>
            <person name="Cotton M."/>
            <person name="Davidson T."/>
            <person name="Desai A."/>
            <person name="Elliott G."/>
            <person name="Erb T."/>
            <person name="Fronick C."/>
            <person name="Gaige T."/>
            <person name="Haakenson W."/>
            <person name="Haglund K."/>
            <person name="Holmes A."/>
            <person name="Harkins R."/>
            <person name="Kim K."/>
            <person name="Kruchowski S.S."/>
            <person name="Strong C.M."/>
            <person name="Grewal N."/>
            <person name="Goyea E."/>
            <person name="Hou S."/>
            <person name="Levy A."/>
            <person name="Martinka S."/>
            <person name="Mead K."/>
            <person name="McLellan M.D."/>
            <person name="Meyer R."/>
            <person name="Randall-Maher J."/>
            <person name="Tomlinson C."/>
            <person name="Dauphin-Kohlberg S."/>
            <person name="Kozlowicz-Reilly A."/>
            <person name="Shah N."/>
            <person name="Swearengen-Shahid S."/>
            <person name="Snider J."/>
            <person name="Strong J.T."/>
            <person name="Thompson J."/>
            <person name="Yoakum M."/>
            <person name="Leonard S."/>
            <person name="Pearman C."/>
            <person name="Trani L."/>
            <person name="Radionenko M."/>
            <person name="Waligorski J.E."/>
            <person name="Wang C."/>
            <person name="Rock S.M."/>
            <person name="Tin-Wollam A.-M."/>
            <person name="Maupin R."/>
            <person name="Latreille P."/>
            <person name="Wendl M.C."/>
            <person name="Yang S.-P."/>
            <person name="Pohl C."/>
            <person name="Wallis J.W."/>
            <person name="Spieth J."/>
            <person name="Bieri T.A."/>
            <person name="Berkowicz N."/>
            <person name="Nelson J.O."/>
            <person name="Osborne J."/>
            <person name="Ding L."/>
            <person name="Meyer R."/>
            <person name="Sabo A."/>
            <person name="Shotland Y."/>
            <person name="Sinha P."/>
            <person name="Wohldmann P.E."/>
            <person name="Cook L.L."/>
            <person name="Hickenbotham M.T."/>
            <person name="Eldred J."/>
            <person name="Williams D."/>
            <person name="Jones T.A."/>
            <person name="She X."/>
            <person name="Ciccarelli F.D."/>
            <person name="Izaurralde E."/>
            <person name="Taylor J."/>
            <person name="Schmutz J."/>
            <person name="Myers R.M."/>
            <person name="Cox D.R."/>
            <person name="Huang X."/>
            <person name="McPherson J.D."/>
            <person name="Mardis E.R."/>
            <person name="Clifton S.W."/>
            <person name="Warren W.C."/>
            <person name="Chinwalla A.T."/>
            <person name="Eddy S.R."/>
            <person name="Marra M.A."/>
            <person name="Ovcharenko I."/>
            <person name="Furey T.S."/>
            <person name="Miller W."/>
            <person name="Eichler E.E."/>
            <person name="Bork P."/>
            <person name="Suyama M."/>
            <person name="Torrents D."/>
            <person name="Waterston R.H."/>
            <person name="Wilson R.K."/>
        </authorList>
    </citation>
    <scope>NUCLEOTIDE SEQUENCE [LARGE SCALE GENOMIC DNA]</scope>
</reference>
<reference key="6">
    <citation type="submission" date="2005-07" db="EMBL/GenBank/DDBJ databases">
        <authorList>
            <person name="Mural R.J."/>
            <person name="Istrail S."/>
            <person name="Sutton G.G."/>
            <person name="Florea L."/>
            <person name="Halpern A.L."/>
            <person name="Mobarry C.M."/>
            <person name="Lippert R."/>
            <person name="Walenz B."/>
            <person name="Shatkay H."/>
            <person name="Dew I."/>
            <person name="Miller J.R."/>
            <person name="Flanigan M.J."/>
            <person name="Edwards N.J."/>
            <person name="Bolanos R."/>
            <person name="Fasulo D."/>
            <person name="Halldorsson B.V."/>
            <person name="Hannenhalli S."/>
            <person name="Turner R."/>
            <person name="Yooseph S."/>
            <person name="Lu F."/>
            <person name="Nusskern D.R."/>
            <person name="Shue B.C."/>
            <person name="Zheng X.H."/>
            <person name="Zhong F."/>
            <person name="Delcher A.L."/>
            <person name="Huson D.H."/>
            <person name="Kravitz S.A."/>
            <person name="Mouchard L."/>
            <person name="Reinert K."/>
            <person name="Remington K.A."/>
            <person name="Clark A.G."/>
            <person name="Waterman M.S."/>
            <person name="Eichler E.E."/>
            <person name="Adams M.D."/>
            <person name="Hunkapiller M.W."/>
            <person name="Myers E.W."/>
            <person name="Venter J.C."/>
        </authorList>
    </citation>
    <scope>NUCLEOTIDE SEQUENCE [LARGE SCALE GENOMIC DNA]</scope>
</reference>
<reference key="7">
    <citation type="journal article" date="2004" name="Genome Res.">
        <title>The status, quality, and expansion of the NIH full-length cDNA project: the Mammalian Gene Collection (MGC).</title>
        <authorList>
            <consortium name="The MGC Project Team"/>
        </authorList>
    </citation>
    <scope>NUCLEOTIDE SEQUENCE [LARGE SCALE MRNA] (ISOFORMS 1 AND 3)</scope>
    <source>
        <tissue>Cervix</tissue>
    </source>
</reference>
<reference key="8">
    <citation type="journal article" date="2002" name="J. Biol. Chem.">
        <title>Binding of the concave surface of the Sds22 superhelix to the alpha 4/alpha 5/alpha 6-triangle of protein phosphatase-1.</title>
        <authorList>
            <person name="Ceulemans H."/>
            <person name="Vulsteke V."/>
            <person name="De Maeyer M."/>
            <person name="Tatchell K."/>
            <person name="Stalmans W."/>
            <person name="Bollen M."/>
        </authorList>
    </citation>
    <scope>INTERACTION WITH PPP1CA; PPP1CB AND PPP1CC ISOFORM 1</scope>
    <scope>MUTAGENESIS OF ASP-148; PHE-170; GLU-192; PHE-214; ASP-280; GLU-300; TRP-302 AND TYR-327</scope>
</reference>
<reference key="9">
    <citation type="journal article" date="2008" name="Proteomics">
        <title>Large-scale phosphoproteome analysis of human liver tissue by enrichment and fractionation of phosphopeptides with strong anion exchange chromatography.</title>
        <authorList>
            <person name="Han G."/>
            <person name="Ye M."/>
            <person name="Zhou H."/>
            <person name="Jiang X."/>
            <person name="Feng S."/>
            <person name="Jiang X."/>
            <person name="Tian R."/>
            <person name="Wan D."/>
            <person name="Zou H."/>
            <person name="Gu J."/>
        </authorList>
    </citation>
    <scope>PHOSPHORYLATION [LARGE SCALE ANALYSIS] AT SER-24 AND SER-27</scope>
    <scope>IDENTIFICATION BY MASS SPECTROMETRY [LARGE SCALE ANALYSIS]</scope>
    <source>
        <tissue>Liver</tissue>
    </source>
</reference>
<reference key="10">
    <citation type="journal article" date="2009" name="Anal. Chem.">
        <title>Lys-N and trypsin cover complementary parts of the phosphoproteome in a refined SCX-based approach.</title>
        <authorList>
            <person name="Gauci S."/>
            <person name="Helbig A.O."/>
            <person name="Slijper M."/>
            <person name="Krijgsveld J."/>
            <person name="Heck A.J."/>
            <person name="Mohammed S."/>
        </authorList>
    </citation>
    <scope>ACETYLATION [LARGE SCALE ANALYSIS] AT ALA-2</scope>
    <scope>CLEAVAGE OF INITIATOR METHIONINE [LARGE SCALE ANALYSIS]</scope>
    <scope>IDENTIFICATION BY MASS SPECTROMETRY [LARGE SCALE ANALYSIS]</scope>
</reference>
<reference key="11">
    <citation type="journal article" date="2010" name="Sci. Signal.">
        <title>Quantitative phosphoproteomics reveals widespread full phosphorylation site occupancy during mitosis.</title>
        <authorList>
            <person name="Olsen J.V."/>
            <person name="Vermeulen M."/>
            <person name="Santamaria A."/>
            <person name="Kumar C."/>
            <person name="Miller M.L."/>
            <person name="Jensen L.J."/>
            <person name="Gnad F."/>
            <person name="Cox J."/>
            <person name="Jensen T.S."/>
            <person name="Nigg E.A."/>
            <person name="Brunak S."/>
            <person name="Mann M."/>
        </authorList>
    </citation>
    <scope>PHOSPHORYLATION [LARGE SCALE ANALYSIS] AT SER-24; SER-27; SER-44 AND SER-47</scope>
    <scope>IDENTIFICATION BY MASS SPECTROMETRY [LARGE SCALE ANALYSIS]</scope>
    <source>
        <tissue>Cervix carcinoma</tissue>
    </source>
</reference>
<reference key="12">
    <citation type="journal article" date="2011" name="BMC Syst. Biol.">
        <title>Initial characterization of the human central proteome.</title>
        <authorList>
            <person name="Burkard T.R."/>
            <person name="Planyavsky M."/>
            <person name="Kaupe I."/>
            <person name="Breitwieser F.P."/>
            <person name="Buerckstuemmer T."/>
            <person name="Bennett K.L."/>
            <person name="Superti-Furga G."/>
            <person name="Colinge J."/>
        </authorList>
    </citation>
    <scope>IDENTIFICATION BY MASS SPECTROMETRY [LARGE SCALE ANALYSIS]</scope>
</reference>
<reference key="13">
    <citation type="journal article" date="2011" name="Sci. Signal.">
        <title>System-wide temporal characterization of the proteome and phosphoproteome of human embryonic stem cell differentiation.</title>
        <authorList>
            <person name="Rigbolt K.T."/>
            <person name="Prokhorova T.A."/>
            <person name="Akimov V."/>
            <person name="Henningsen J."/>
            <person name="Johansen P.T."/>
            <person name="Kratchmarova I."/>
            <person name="Kassem M."/>
            <person name="Mann M."/>
            <person name="Olsen J.V."/>
            <person name="Blagoev B."/>
        </authorList>
    </citation>
    <scope>PHOSPHORYLATION [LARGE SCALE ANALYSIS] AT SER-12; SER-24 AND SER-27</scope>
    <scope>IDENTIFICATION BY MASS SPECTROMETRY [LARGE SCALE ANALYSIS]</scope>
</reference>
<reference key="14">
    <citation type="journal article" date="2013" name="J. Proteome Res.">
        <title>Toward a comprehensive characterization of a human cancer cell phosphoproteome.</title>
        <authorList>
            <person name="Zhou H."/>
            <person name="Di Palma S."/>
            <person name="Preisinger C."/>
            <person name="Peng M."/>
            <person name="Polat A.N."/>
            <person name="Heck A.J."/>
            <person name="Mohammed S."/>
        </authorList>
    </citation>
    <scope>PHOSPHORYLATION [LARGE SCALE ANALYSIS] AT SER-12 AND SER-322</scope>
    <scope>IDENTIFICATION BY MASS SPECTROMETRY [LARGE SCALE ANALYSIS]</scope>
    <source>
        <tissue>Erythroleukemia</tissue>
    </source>
</reference>
<reference key="15">
    <citation type="journal article" date="2014" name="J. Proteomics">
        <title>An enzyme assisted RP-RPLC approach for in-depth analysis of human liver phosphoproteome.</title>
        <authorList>
            <person name="Bian Y."/>
            <person name="Song C."/>
            <person name="Cheng K."/>
            <person name="Dong M."/>
            <person name="Wang F."/>
            <person name="Huang J."/>
            <person name="Sun D."/>
            <person name="Wang L."/>
            <person name="Ye M."/>
            <person name="Zou H."/>
        </authorList>
    </citation>
    <scope>PHOSPHORYLATION [LARGE SCALE ANALYSIS] AT SER-27; SER-44 AND SER-47</scope>
    <scope>IDENTIFICATION BY MASS SPECTROMETRY [LARGE SCALE ANALYSIS]</scope>
    <source>
        <tissue>Liver</tissue>
    </source>
</reference>
<comment type="function">
    <text evidence="1">Regulatory subunit of protein phosphatase 1.</text>
</comment>
<comment type="subunit">
    <text evidence="3">Interacts with PPP1CA, PPP1CB and PPP1CC/PPP1G isoform 1.</text>
</comment>
<comment type="interaction">
    <interactant intactId="EBI-1024281">
        <id>Q15435</id>
    </interactant>
    <interactant intactId="EBI-21634885">
        <id>O15480</id>
        <label>MAGEB3</label>
    </interactant>
    <organismsDiffer>false</organismsDiffer>
    <experiments>3</experiments>
</comment>
<comment type="interaction">
    <interactant intactId="EBI-1024281">
        <id>Q15435</id>
    </interactant>
    <interactant intactId="EBI-357253">
        <id>P62136</id>
        <label>PPP1CA</label>
    </interactant>
    <organismsDiffer>false</organismsDiffer>
    <experiments>8</experiments>
</comment>
<comment type="interaction">
    <interactant intactId="EBI-1024281">
        <id>Q15435</id>
    </interactant>
    <interactant intactId="EBI-352350">
        <id>P62140</id>
        <label>PPP1CB</label>
    </interactant>
    <organismsDiffer>false</organismsDiffer>
    <experiments>10</experiments>
</comment>
<comment type="interaction">
    <interactant intactId="EBI-1024281">
        <id>Q15435</id>
    </interactant>
    <interactant intactId="EBI-356283">
        <id>P36873</id>
        <label>PPP1CC</label>
    </interactant>
    <organismsDiffer>false</organismsDiffer>
    <experiments>8</experiments>
</comment>
<comment type="interaction">
    <interactant intactId="EBI-1024281">
        <id>Q15435</id>
    </interactant>
    <interactant intactId="EBI-739895">
        <id>Q8N6Y0</id>
        <label>USHBP1</label>
    </interactant>
    <organismsDiffer>false</organismsDiffer>
    <experiments>3</experiments>
</comment>
<comment type="interaction">
    <interactant intactId="EBI-10695066">
        <id>Q15435-3</id>
    </interactant>
    <interactant intactId="EBI-350145">
        <id>P01112</id>
        <label>HRAS</label>
    </interactant>
    <organismsDiffer>false</organismsDiffer>
    <experiments>3</experiments>
</comment>
<comment type="subcellular location">
    <subcellularLocation>
        <location evidence="1">Nucleus</location>
    </subcellularLocation>
</comment>
<comment type="alternative products">
    <event type="alternative splicing"/>
    <isoform>
        <id>Q15435-1</id>
        <name>1</name>
        <name>sds22alpha1</name>
        <sequence type="displayed"/>
    </isoform>
    <isoform>
        <id>Q15435-2</id>
        <name>2</name>
        <name>sds22alpha2</name>
        <sequence type="described" ref="VSP_019244"/>
    </isoform>
    <isoform>
        <id>Q15435-3</id>
        <name>3</name>
        <name>sds22beta1</name>
        <sequence type="described" ref="VSP_019245 VSP_019246"/>
    </isoform>
    <isoform>
        <id>Q15435-4</id>
        <name>4</name>
        <name>sds22beta2</name>
        <sequence type="described" ref="VSP_019244 VSP_019245 VSP_019246"/>
    </isoform>
    <isoform>
        <id>Q15435-5</id>
        <name>5</name>
        <sequence type="described" ref="VSP_055672 VSP_019245 VSP_019246"/>
    </isoform>
</comment>
<comment type="tissue specificity">
    <text evidence="4">Widely expressed.</text>
</comment>
<comment type="similarity">
    <text evidence="8">Belongs to the SDS22 family.</text>
</comment>
<dbReference type="EMBL" id="Z50749">
    <property type="protein sequence ID" value="CAA90626.1"/>
    <property type="molecule type" value="mRNA"/>
</dbReference>
<dbReference type="EMBL" id="AF067136">
    <property type="protein sequence ID" value="AAD26610.1"/>
    <property type="molecule type" value="Genomic_DNA"/>
</dbReference>
<dbReference type="EMBL" id="AF067130">
    <property type="protein sequence ID" value="AAD26610.1"/>
    <property type="status" value="JOINED"/>
    <property type="molecule type" value="Genomic_DNA"/>
</dbReference>
<dbReference type="EMBL" id="AF067132">
    <property type="protein sequence ID" value="AAD26610.1"/>
    <property type="status" value="JOINED"/>
    <property type="molecule type" value="Genomic_DNA"/>
</dbReference>
<dbReference type="EMBL" id="AF067133">
    <property type="protein sequence ID" value="AAD26610.1"/>
    <property type="status" value="JOINED"/>
    <property type="molecule type" value="Genomic_DNA"/>
</dbReference>
<dbReference type="EMBL" id="AF067134">
    <property type="protein sequence ID" value="AAD26610.1"/>
    <property type="status" value="JOINED"/>
    <property type="molecule type" value="Genomic_DNA"/>
</dbReference>
<dbReference type="EMBL" id="AF067135">
    <property type="protein sequence ID" value="AAD26610.1"/>
    <property type="status" value="JOINED"/>
    <property type="molecule type" value="Genomic_DNA"/>
</dbReference>
<dbReference type="EMBL" id="AF067136">
    <property type="protein sequence ID" value="AAD26611.1"/>
    <property type="molecule type" value="Genomic_DNA"/>
</dbReference>
<dbReference type="EMBL" id="AF067130">
    <property type="protein sequence ID" value="AAD26611.1"/>
    <property type="status" value="JOINED"/>
    <property type="molecule type" value="Genomic_DNA"/>
</dbReference>
<dbReference type="EMBL" id="AF067132">
    <property type="protein sequence ID" value="AAD26611.1"/>
    <property type="status" value="JOINED"/>
    <property type="molecule type" value="Genomic_DNA"/>
</dbReference>
<dbReference type="EMBL" id="AF067134">
    <property type="protein sequence ID" value="AAD26611.1"/>
    <property type="status" value="JOINED"/>
    <property type="molecule type" value="Genomic_DNA"/>
</dbReference>
<dbReference type="EMBL" id="AF067135">
    <property type="protein sequence ID" value="AAD26611.1"/>
    <property type="status" value="JOINED"/>
    <property type="molecule type" value="Genomic_DNA"/>
</dbReference>
<dbReference type="EMBL" id="AF067133">
    <property type="protein sequence ID" value="AAD26611.1"/>
    <property type="status" value="JOINED"/>
    <property type="molecule type" value="Genomic_DNA"/>
</dbReference>
<dbReference type="EMBL" id="AF067131">
    <property type="protein sequence ID" value="AAD26611.1"/>
    <property type="status" value="JOINED"/>
    <property type="molecule type" value="Genomic_DNA"/>
</dbReference>
<dbReference type="EMBL" id="AF067134">
    <property type="protein sequence ID" value="AAD26612.1"/>
    <property type="molecule type" value="Genomic_DNA"/>
</dbReference>
<dbReference type="EMBL" id="AF067130">
    <property type="protein sequence ID" value="AAD26612.1"/>
    <property type="status" value="JOINED"/>
    <property type="molecule type" value="Genomic_DNA"/>
</dbReference>
<dbReference type="EMBL" id="AF067131">
    <property type="protein sequence ID" value="AAD26612.1"/>
    <property type="status" value="JOINED"/>
    <property type="molecule type" value="Genomic_DNA"/>
</dbReference>
<dbReference type="EMBL" id="AF067132">
    <property type="protein sequence ID" value="AAD26612.1"/>
    <property type="status" value="JOINED"/>
    <property type="molecule type" value="Genomic_DNA"/>
</dbReference>
<dbReference type="EMBL" id="AF067133">
    <property type="protein sequence ID" value="AAD26612.1"/>
    <property type="status" value="JOINED"/>
    <property type="molecule type" value="Genomic_DNA"/>
</dbReference>
<dbReference type="EMBL" id="AF067134">
    <property type="protein sequence ID" value="AAD26613.1"/>
    <property type="molecule type" value="Genomic_DNA"/>
</dbReference>
<dbReference type="EMBL" id="AF067132">
    <property type="protein sequence ID" value="AAD26613.1"/>
    <property type="status" value="JOINED"/>
    <property type="molecule type" value="Genomic_DNA"/>
</dbReference>
<dbReference type="EMBL" id="AF067130">
    <property type="protein sequence ID" value="AAD26613.1"/>
    <property type="status" value="JOINED"/>
    <property type="molecule type" value="Genomic_DNA"/>
</dbReference>
<dbReference type="EMBL" id="AF067133">
    <property type="protein sequence ID" value="AAD26613.1"/>
    <property type="status" value="JOINED"/>
    <property type="molecule type" value="Genomic_DNA"/>
</dbReference>
<dbReference type="EMBL" id="BT007296">
    <property type="protein sequence ID" value="AAP35960.1"/>
    <property type="molecule type" value="mRNA"/>
</dbReference>
<dbReference type="EMBL" id="BT020134">
    <property type="protein sequence ID" value="AAV38936.1"/>
    <property type="molecule type" value="mRNA"/>
</dbReference>
<dbReference type="EMBL" id="AK294043">
    <property type="protein sequence ID" value="BAG57395.1"/>
    <property type="molecule type" value="mRNA"/>
</dbReference>
<dbReference type="EMBL" id="AC005237">
    <property type="status" value="NOT_ANNOTATED_CDS"/>
    <property type="molecule type" value="Genomic_DNA"/>
</dbReference>
<dbReference type="EMBL" id="CH471063">
    <property type="protein sequence ID" value="EAW71243.1"/>
    <property type="molecule type" value="Genomic_DNA"/>
</dbReference>
<dbReference type="EMBL" id="BC000910">
    <property type="protein sequence ID" value="AAH00910.1"/>
    <property type="molecule type" value="mRNA"/>
</dbReference>
<dbReference type="EMBL" id="BC012397">
    <property type="protein sequence ID" value="AAH12397.1"/>
    <property type="molecule type" value="mRNA"/>
</dbReference>
<dbReference type="EMBL" id="BC013001">
    <property type="protein sequence ID" value="AAH13001.1"/>
    <property type="molecule type" value="mRNA"/>
</dbReference>
<dbReference type="CCDS" id="CCDS2546.1">
    <molecule id="Q15435-1"/>
</dbReference>
<dbReference type="CCDS" id="CCDS63190.1">
    <molecule id="Q15435-5"/>
</dbReference>
<dbReference type="CCDS" id="CCDS63192.1">
    <molecule id="Q15435-3"/>
</dbReference>
<dbReference type="CCDS" id="CCDS63193.1">
    <molecule id="Q15435-4"/>
</dbReference>
<dbReference type="CCDS" id="CCDS63194.1">
    <molecule id="Q15435-2"/>
</dbReference>
<dbReference type="PIR" id="S68209">
    <property type="entry name" value="S68209"/>
</dbReference>
<dbReference type="RefSeq" id="NP_001269338.1">
    <molecule id="Q15435-2"/>
    <property type="nucleotide sequence ID" value="NM_001282409.1"/>
</dbReference>
<dbReference type="RefSeq" id="NP_001269339.1">
    <molecule id="Q15435-3"/>
    <property type="nucleotide sequence ID" value="NM_001282410.1"/>
</dbReference>
<dbReference type="RefSeq" id="NP_001269340.1">
    <molecule id="Q15435-4"/>
    <property type="nucleotide sequence ID" value="NM_001282411.1"/>
</dbReference>
<dbReference type="RefSeq" id="NP_001269341.1">
    <property type="nucleotide sequence ID" value="NM_001282412.1"/>
</dbReference>
<dbReference type="RefSeq" id="NP_001269342.1">
    <property type="nucleotide sequence ID" value="NM_001282413.1"/>
</dbReference>
<dbReference type="RefSeq" id="NP_001269343.1">
    <molecule id="Q15435-5"/>
    <property type="nucleotide sequence ID" value="NM_001282414.1"/>
</dbReference>
<dbReference type="RefSeq" id="NP_002703.1">
    <molecule id="Q15435-1"/>
    <property type="nucleotide sequence ID" value="NM_002712.3"/>
</dbReference>
<dbReference type="PDB" id="6HKW">
    <property type="method" value="X-ray"/>
    <property type="resolution" value="3.09 A"/>
    <property type="chains" value="A/B/C/D/E=1-360"/>
</dbReference>
<dbReference type="PDB" id="6MKY">
    <property type="method" value="X-ray"/>
    <property type="resolution" value="2.90 A"/>
    <property type="chains" value="A/B=100-360"/>
</dbReference>
<dbReference type="PDB" id="6OBN">
    <property type="method" value="X-ray"/>
    <property type="resolution" value="2.70 A"/>
    <property type="chains" value="C/D=56-360"/>
</dbReference>
<dbReference type="PDB" id="6OBP">
    <property type="method" value="X-ray"/>
    <property type="resolution" value="2.70 A"/>
    <property type="chains" value="C=56-360"/>
</dbReference>
<dbReference type="PDB" id="8B5R">
    <property type="method" value="EM"/>
    <property type="resolution" value="6.10 A"/>
    <property type="chains" value="S=1-360"/>
</dbReference>
<dbReference type="PDB" id="8U5G">
    <property type="method" value="X-ray"/>
    <property type="resolution" value="3.20 A"/>
    <property type="chains" value="B=56-360"/>
</dbReference>
<dbReference type="PDBsum" id="6HKW"/>
<dbReference type="PDBsum" id="6MKY"/>
<dbReference type="PDBsum" id="6OBN"/>
<dbReference type="PDBsum" id="6OBP"/>
<dbReference type="PDBsum" id="8B5R"/>
<dbReference type="PDBsum" id="8U5G"/>
<dbReference type="EMDB" id="EMD-15774"/>
<dbReference type="EMDB" id="EMD-15778"/>
<dbReference type="EMDB" id="EMD-15846"/>
<dbReference type="EMDB" id="EMD-15847"/>
<dbReference type="EMDB" id="EMD-15861"/>
<dbReference type="SMR" id="Q15435"/>
<dbReference type="BioGRID" id="111502">
    <property type="interactions" value="108"/>
</dbReference>
<dbReference type="DIP" id="DIP-1005N"/>
<dbReference type="FunCoup" id="Q15435">
    <property type="interactions" value="1593"/>
</dbReference>
<dbReference type="IntAct" id="Q15435">
    <property type="interactions" value="63"/>
</dbReference>
<dbReference type="MINT" id="Q15435"/>
<dbReference type="STRING" id="9606.ENSP00000234038"/>
<dbReference type="GlyGen" id="Q15435">
    <property type="glycosylation" value="2 sites, 1 N-linked glycan (1 site), 1 O-linked glycan (1 site)"/>
</dbReference>
<dbReference type="iPTMnet" id="Q15435"/>
<dbReference type="MetOSite" id="Q15435"/>
<dbReference type="PhosphoSitePlus" id="Q15435"/>
<dbReference type="BioMuta" id="PPP1R7"/>
<dbReference type="DMDM" id="74762145"/>
<dbReference type="REPRODUCTION-2DPAGE" id="IPI00033600"/>
<dbReference type="jPOST" id="Q15435"/>
<dbReference type="MassIVE" id="Q15435"/>
<dbReference type="PaxDb" id="9606-ENSP00000234038"/>
<dbReference type="PeptideAtlas" id="Q15435"/>
<dbReference type="ProteomicsDB" id="60591">
    <molecule id="Q15435-1"/>
</dbReference>
<dbReference type="ProteomicsDB" id="60592">
    <molecule id="Q15435-2"/>
</dbReference>
<dbReference type="ProteomicsDB" id="60593">
    <molecule id="Q15435-3"/>
</dbReference>
<dbReference type="ProteomicsDB" id="60594">
    <molecule id="Q15435-4"/>
</dbReference>
<dbReference type="ProteomicsDB" id="6128"/>
<dbReference type="Pumba" id="Q15435"/>
<dbReference type="Antibodypedia" id="34547">
    <property type="antibodies" value="258 antibodies from 28 providers"/>
</dbReference>
<dbReference type="DNASU" id="5510"/>
<dbReference type="Ensembl" id="ENST00000234038.11">
    <molecule id="Q15435-1"/>
    <property type="protein sequence ID" value="ENSP00000234038.6"/>
    <property type="gene ID" value="ENSG00000115685.15"/>
</dbReference>
<dbReference type="Ensembl" id="ENST00000272983.12">
    <molecule id="Q15435-2"/>
    <property type="protein sequence ID" value="ENSP00000272983.8"/>
    <property type="gene ID" value="ENSG00000115685.15"/>
</dbReference>
<dbReference type="Ensembl" id="ENST00000401987.5">
    <molecule id="Q15435-4"/>
    <property type="protein sequence ID" value="ENSP00000385466.1"/>
    <property type="gene ID" value="ENSG00000115685.15"/>
</dbReference>
<dbReference type="Ensembl" id="ENST00000402734.5">
    <molecule id="Q15435-5"/>
    <property type="protein sequence ID" value="ENSP00000385012.1"/>
    <property type="gene ID" value="ENSG00000115685.15"/>
</dbReference>
<dbReference type="Ensembl" id="ENST00000406106.7">
    <molecule id="Q15435-3"/>
    <property type="protein sequence ID" value="ENSP00000385022.3"/>
    <property type="gene ID" value="ENSG00000115685.15"/>
</dbReference>
<dbReference type="Ensembl" id="ENST00000407025.5">
    <molecule id="Q15435-1"/>
    <property type="protein sequence ID" value="ENSP00000385657.1"/>
    <property type="gene ID" value="ENSG00000115685.15"/>
</dbReference>
<dbReference type="GeneID" id="5510"/>
<dbReference type="KEGG" id="hsa:5510"/>
<dbReference type="MANE-Select" id="ENST00000234038.11">
    <property type="protein sequence ID" value="ENSP00000234038.6"/>
    <property type="RefSeq nucleotide sequence ID" value="NM_002712.3"/>
    <property type="RefSeq protein sequence ID" value="NP_002703.1"/>
</dbReference>
<dbReference type="UCSC" id="uc002was.5">
    <molecule id="Q15435-1"/>
    <property type="organism name" value="human"/>
</dbReference>
<dbReference type="AGR" id="HGNC:9295"/>
<dbReference type="CTD" id="5510"/>
<dbReference type="DisGeNET" id="5510"/>
<dbReference type="GeneCards" id="PPP1R7"/>
<dbReference type="HGNC" id="HGNC:9295">
    <property type="gene designation" value="PPP1R7"/>
</dbReference>
<dbReference type="HPA" id="ENSG00000115685">
    <property type="expression patterns" value="Low tissue specificity"/>
</dbReference>
<dbReference type="MIM" id="602877">
    <property type="type" value="gene"/>
</dbReference>
<dbReference type="neXtProt" id="NX_Q15435"/>
<dbReference type="OpenTargets" id="ENSG00000115685"/>
<dbReference type="PharmGKB" id="PA33658"/>
<dbReference type="VEuPathDB" id="HostDB:ENSG00000115685"/>
<dbReference type="eggNOG" id="KOG0531">
    <property type="taxonomic scope" value="Eukaryota"/>
</dbReference>
<dbReference type="GeneTree" id="ENSGT00940000158551"/>
<dbReference type="InParanoid" id="Q15435"/>
<dbReference type="OMA" id="EVWASYN"/>
<dbReference type="OrthoDB" id="7451790at2759"/>
<dbReference type="PAN-GO" id="Q15435">
    <property type="GO annotations" value="3 GO annotations based on evolutionary models"/>
</dbReference>
<dbReference type="PhylomeDB" id="Q15435"/>
<dbReference type="TreeFam" id="TF105538"/>
<dbReference type="PathwayCommons" id="Q15435"/>
<dbReference type="SignaLink" id="Q15435"/>
<dbReference type="BioGRID-ORCS" id="5510">
    <property type="hits" value="678 hits in 1171 CRISPR screens"/>
</dbReference>
<dbReference type="CD-CODE" id="FB4E32DD">
    <property type="entry name" value="Presynaptic clusters and postsynaptic densities"/>
</dbReference>
<dbReference type="ChiTaRS" id="PPP1R7">
    <property type="organism name" value="human"/>
</dbReference>
<dbReference type="GeneWiki" id="PPP1R7"/>
<dbReference type="GenomeRNAi" id="5510"/>
<dbReference type="Pharos" id="Q15435">
    <property type="development level" value="Tbio"/>
</dbReference>
<dbReference type="PRO" id="PR:Q15435"/>
<dbReference type="Proteomes" id="UP000005640">
    <property type="component" value="Chromosome 2"/>
</dbReference>
<dbReference type="RNAct" id="Q15435">
    <property type="molecule type" value="protein"/>
</dbReference>
<dbReference type="Bgee" id="ENSG00000115685">
    <property type="expression patterns" value="Expressed in right testis and 205 other cell types or tissues"/>
</dbReference>
<dbReference type="ExpressionAtlas" id="Q15435">
    <property type="expression patterns" value="baseline and differential"/>
</dbReference>
<dbReference type="GO" id="GO:0005694">
    <property type="term" value="C:chromosome"/>
    <property type="evidence" value="ECO:0000314"/>
    <property type="project" value="MGI"/>
</dbReference>
<dbReference type="GO" id="GO:0005737">
    <property type="term" value="C:cytoplasm"/>
    <property type="evidence" value="ECO:0000304"/>
    <property type="project" value="ProtInc"/>
</dbReference>
<dbReference type="GO" id="GO:0070062">
    <property type="term" value="C:extracellular exosome"/>
    <property type="evidence" value="ECO:0007005"/>
    <property type="project" value="UniProtKB"/>
</dbReference>
<dbReference type="GO" id="GO:0005634">
    <property type="term" value="C:nucleus"/>
    <property type="evidence" value="ECO:0007005"/>
    <property type="project" value="UniProtKB"/>
</dbReference>
<dbReference type="GO" id="GO:0030234">
    <property type="term" value="F:enzyme regulator activity"/>
    <property type="evidence" value="ECO:0000303"/>
    <property type="project" value="UniProtKB"/>
</dbReference>
<dbReference type="GO" id="GO:0019888">
    <property type="term" value="F:protein phosphatase regulator activity"/>
    <property type="evidence" value="ECO:0000315"/>
    <property type="project" value="MGI"/>
</dbReference>
<dbReference type="FunFam" id="3.80.10.10:FF:000055">
    <property type="entry name" value="Protein phosphatase 1 regulatory subunit 7"/>
    <property type="match status" value="1"/>
</dbReference>
<dbReference type="FunFam" id="3.80.10.10:FF:000127">
    <property type="entry name" value="protein phosphatase 1 regulatory subunit 7 isoform X2"/>
    <property type="match status" value="1"/>
</dbReference>
<dbReference type="Gene3D" id="3.80.10.10">
    <property type="entry name" value="Ribonuclease Inhibitor"/>
    <property type="match status" value="2"/>
</dbReference>
<dbReference type="InterPro" id="IPR050576">
    <property type="entry name" value="Cilia_flagella_integrity"/>
</dbReference>
<dbReference type="InterPro" id="IPR001611">
    <property type="entry name" value="Leu-rich_rpt"/>
</dbReference>
<dbReference type="InterPro" id="IPR025875">
    <property type="entry name" value="Leu-rich_rpt_4"/>
</dbReference>
<dbReference type="InterPro" id="IPR003591">
    <property type="entry name" value="Leu-rich_rpt_typical-subtyp"/>
</dbReference>
<dbReference type="InterPro" id="IPR032675">
    <property type="entry name" value="LRR_dom_sf"/>
</dbReference>
<dbReference type="InterPro" id="IPR003603">
    <property type="entry name" value="U2A'_phosphoprotein32A_C"/>
</dbReference>
<dbReference type="PANTHER" id="PTHR45973:SF23">
    <property type="entry name" value="PROTEIN PHOSPHATASE 1 REGULATORY SUBUNIT 7"/>
    <property type="match status" value="1"/>
</dbReference>
<dbReference type="PANTHER" id="PTHR45973">
    <property type="entry name" value="PROTEIN PHOSPHATASE 1 REGULATORY SUBUNIT SDS22-RELATED"/>
    <property type="match status" value="1"/>
</dbReference>
<dbReference type="Pfam" id="PF12799">
    <property type="entry name" value="LRR_4"/>
    <property type="match status" value="3"/>
</dbReference>
<dbReference type="Pfam" id="PF14580">
    <property type="entry name" value="LRR_9"/>
    <property type="match status" value="1"/>
</dbReference>
<dbReference type="SMART" id="SM00365">
    <property type="entry name" value="LRR_SD22"/>
    <property type="match status" value="10"/>
</dbReference>
<dbReference type="SMART" id="SM00369">
    <property type="entry name" value="LRR_TYP"/>
    <property type="match status" value="7"/>
</dbReference>
<dbReference type="SMART" id="SM00446">
    <property type="entry name" value="LRRcap"/>
    <property type="match status" value="1"/>
</dbReference>
<dbReference type="SUPFAM" id="SSF52058">
    <property type="entry name" value="L domain-like"/>
    <property type="match status" value="1"/>
</dbReference>
<dbReference type="PROSITE" id="PS51450">
    <property type="entry name" value="LRR"/>
    <property type="match status" value="12"/>
</dbReference>
<organism>
    <name type="scientific">Homo sapiens</name>
    <name type="common">Human</name>
    <dbReference type="NCBI Taxonomy" id="9606"/>
    <lineage>
        <taxon>Eukaryota</taxon>
        <taxon>Metazoa</taxon>
        <taxon>Chordata</taxon>
        <taxon>Craniata</taxon>
        <taxon>Vertebrata</taxon>
        <taxon>Euteleostomi</taxon>
        <taxon>Mammalia</taxon>
        <taxon>Eutheria</taxon>
        <taxon>Euarchontoglires</taxon>
        <taxon>Primates</taxon>
        <taxon>Haplorrhini</taxon>
        <taxon>Catarrhini</taxon>
        <taxon>Hominidae</taxon>
        <taxon>Homo</taxon>
    </lineage>
</organism>
<protein>
    <recommendedName>
        <fullName>Protein phosphatase 1 regulatory subunit 7</fullName>
    </recommendedName>
    <alternativeName>
        <fullName>Protein phosphatase 1 regulatory subunit 22</fullName>
    </alternativeName>
</protein>